<sequence>MTSQGPLYIGFDLSTQQLKGLVVNSELKVVHVSKFDFDADSHGFSIKKGVLTNEAEHEVFAPVALWLQALDGVLDGLRKQGLDFSRVKGISGAGQQHGSVYWGENAESLLKSLDSSKSLEEQLSGAFSHPFSPNWQDASTQKECDEFDAFLGGPEQLAEATGSKAHHRFTGPQILRMQRKYPEVYRKTARISLVSSFLASLLLGYIAPMDISDVCGMNLWDIKKGAYNEKLLGLCAGPFGAEDLKRKLGDVPEDGGLRLGKINRYFVERYGFSSNCEILPSTGDNPATILALPLRPSDAMVSLGTSTTFLMSTPSYKPDPATHFFNHPTTPGLYMFMLCYKNGGLAREHVRDAINEKSGSGASQSWESFDKIMLETPPMGQKTESGPMKMGLFFPRPEIVPNVRSGQWRFTYDPASDTLTETEDGWNKPSDEARAIVESQMLSLRLRSRGLTQSPGDGLPPQPRRVYLVGGGSKNKAIAKVAGEILGGSDGVYKLDVGDNACALGAAYKAVWAIERKPGQTFEDLIGQRWREEEFIEKIADGYQKGVFEKYGKAVEGFERMEQQVLKQEAARK</sequence>
<organism>
    <name type="scientific">Neosartorya fischeri (strain ATCC 1020 / DSM 3700 / CBS 544.65 / FGSC A1164 / JCM 1740 / NRRL 181 / WB 181)</name>
    <name type="common">Aspergillus fischerianus</name>
    <dbReference type="NCBI Taxonomy" id="331117"/>
    <lineage>
        <taxon>Eukaryota</taxon>
        <taxon>Fungi</taxon>
        <taxon>Dikarya</taxon>
        <taxon>Ascomycota</taxon>
        <taxon>Pezizomycotina</taxon>
        <taxon>Eurotiomycetes</taxon>
        <taxon>Eurotiomycetidae</taxon>
        <taxon>Eurotiales</taxon>
        <taxon>Aspergillaceae</taxon>
        <taxon>Aspergillus</taxon>
        <taxon>Aspergillus subgen. Fumigati</taxon>
    </lineage>
</organism>
<accession>A1DEK3</accession>
<feature type="chain" id="PRO_0000393526" description="Probable D-xylulose kinase A">
    <location>
        <begin position="1"/>
        <end position="573"/>
    </location>
</feature>
<feature type="binding site" evidence="1">
    <location>
        <position position="97"/>
    </location>
    <ligand>
        <name>substrate</name>
    </ligand>
</feature>
<feature type="binding site" evidence="1">
    <location>
        <position position="168"/>
    </location>
    <ligand>
        <name>substrate</name>
    </ligand>
</feature>
<feature type="binding site" evidence="1">
    <location>
        <position position="284"/>
    </location>
    <ligand>
        <name>substrate</name>
    </ligand>
</feature>
<feature type="binding site" evidence="1">
    <location>
        <position position="285"/>
    </location>
    <ligand>
        <name>substrate</name>
    </ligand>
</feature>
<feature type="binding site" evidence="1">
    <location>
        <position position="366"/>
    </location>
    <ligand>
        <name>ATP</name>
        <dbReference type="ChEBI" id="CHEBI:30616"/>
    </ligand>
</feature>
<feature type="binding site" evidence="1">
    <location>
        <begin position="471"/>
        <end position="472"/>
    </location>
    <ligand>
        <name>ATP</name>
        <dbReference type="ChEBI" id="CHEBI:30616"/>
    </ligand>
</feature>
<feature type="binding site" evidence="1">
    <location>
        <position position="475"/>
    </location>
    <ligand>
        <name>ATP</name>
        <dbReference type="ChEBI" id="CHEBI:30616"/>
    </ligand>
</feature>
<reference key="1">
    <citation type="journal article" date="2008" name="PLoS Genet.">
        <title>Genomic islands in the pathogenic filamentous fungus Aspergillus fumigatus.</title>
        <authorList>
            <person name="Fedorova N.D."/>
            <person name="Khaldi N."/>
            <person name="Joardar V.S."/>
            <person name="Maiti R."/>
            <person name="Amedeo P."/>
            <person name="Anderson M.J."/>
            <person name="Crabtree J."/>
            <person name="Silva J.C."/>
            <person name="Badger J.H."/>
            <person name="Albarraq A."/>
            <person name="Angiuoli S."/>
            <person name="Bussey H."/>
            <person name="Bowyer P."/>
            <person name="Cotty P.J."/>
            <person name="Dyer P.S."/>
            <person name="Egan A."/>
            <person name="Galens K."/>
            <person name="Fraser-Liggett C.M."/>
            <person name="Haas B.J."/>
            <person name="Inman J.M."/>
            <person name="Kent R."/>
            <person name="Lemieux S."/>
            <person name="Malavazi I."/>
            <person name="Orvis J."/>
            <person name="Roemer T."/>
            <person name="Ronning C.M."/>
            <person name="Sundaram J.P."/>
            <person name="Sutton G."/>
            <person name="Turner G."/>
            <person name="Venter J.C."/>
            <person name="White O.R."/>
            <person name="Whitty B.R."/>
            <person name="Youngman P."/>
            <person name="Wolfe K.H."/>
            <person name="Goldman G.H."/>
            <person name="Wortman J.R."/>
            <person name="Jiang B."/>
            <person name="Denning D.W."/>
            <person name="Nierman W.C."/>
        </authorList>
    </citation>
    <scope>NUCLEOTIDE SEQUENCE [LARGE SCALE GENOMIC DNA]</scope>
    <source>
        <strain>ATCC 1020 / DSM 3700 / CBS 544.65 / FGSC A1164 / JCM 1740 / NRRL 181 / WB 181</strain>
    </source>
</reference>
<evidence type="ECO:0000250" key="1"/>
<evidence type="ECO:0000305" key="2"/>
<protein>
    <recommendedName>
        <fullName>Probable D-xylulose kinase A</fullName>
        <shortName>Xylulokinase A</shortName>
        <ecNumber>2.7.1.17</ecNumber>
    </recommendedName>
</protein>
<dbReference type="EC" id="2.7.1.17"/>
<dbReference type="EMBL" id="DS027696">
    <property type="protein sequence ID" value="EAW17810.1"/>
    <property type="molecule type" value="Genomic_DNA"/>
</dbReference>
<dbReference type="RefSeq" id="XP_001259707.1">
    <property type="nucleotide sequence ID" value="XM_001259706.1"/>
</dbReference>
<dbReference type="SMR" id="A1DEK3"/>
<dbReference type="STRING" id="331117.A1DEK3"/>
<dbReference type="EnsemblFungi" id="EAW17810">
    <property type="protein sequence ID" value="EAW17810"/>
    <property type="gene ID" value="NFIA_077470"/>
</dbReference>
<dbReference type="GeneID" id="4586369"/>
<dbReference type="KEGG" id="nfi:NFIA_077470"/>
<dbReference type="VEuPathDB" id="FungiDB:NFIA_077470"/>
<dbReference type="eggNOG" id="KOG2531">
    <property type="taxonomic scope" value="Eukaryota"/>
</dbReference>
<dbReference type="HOGENOM" id="CLU_016149_5_0_1"/>
<dbReference type="OMA" id="NSCALGG"/>
<dbReference type="OrthoDB" id="1728974at2759"/>
<dbReference type="Proteomes" id="UP000006702">
    <property type="component" value="Unassembled WGS sequence"/>
</dbReference>
<dbReference type="GO" id="GO:0005829">
    <property type="term" value="C:cytosol"/>
    <property type="evidence" value="ECO:0007669"/>
    <property type="project" value="TreeGrafter"/>
</dbReference>
<dbReference type="GO" id="GO:0005524">
    <property type="term" value="F:ATP binding"/>
    <property type="evidence" value="ECO:0007669"/>
    <property type="project" value="UniProtKB-KW"/>
</dbReference>
<dbReference type="GO" id="GO:0004856">
    <property type="term" value="F:D-xylulokinase activity"/>
    <property type="evidence" value="ECO:0007669"/>
    <property type="project" value="UniProtKB-EC"/>
</dbReference>
<dbReference type="GO" id="GO:0042732">
    <property type="term" value="P:D-xylose metabolic process"/>
    <property type="evidence" value="ECO:0007669"/>
    <property type="project" value="UniProtKB-KW"/>
</dbReference>
<dbReference type="GO" id="GO:0005997">
    <property type="term" value="P:xylulose metabolic process"/>
    <property type="evidence" value="ECO:0007669"/>
    <property type="project" value="TreeGrafter"/>
</dbReference>
<dbReference type="CDD" id="cd07776">
    <property type="entry name" value="ASKHA_NBD_FGGY_SpXK-like"/>
    <property type="match status" value="1"/>
</dbReference>
<dbReference type="FunFam" id="3.30.420.40:FF:000118">
    <property type="entry name" value="Xylulose kinase 2"/>
    <property type="match status" value="1"/>
</dbReference>
<dbReference type="Gene3D" id="3.30.420.40">
    <property type="match status" value="2"/>
</dbReference>
<dbReference type="InterPro" id="IPR043129">
    <property type="entry name" value="ATPase_NBD"/>
</dbReference>
<dbReference type="InterPro" id="IPR042024">
    <property type="entry name" value="D-XK_euk"/>
</dbReference>
<dbReference type="InterPro" id="IPR018485">
    <property type="entry name" value="FGGY_C"/>
</dbReference>
<dbReference type="InterPro" id="IPR018484">
    <property type="entry name" value="FGGY_N"/>
</dbReference>
<dbReference type="PANTHER" id="PTHR10196">
    <property type="entry name" value="SUGAR KINASE"/>
    <property type="match status" value="1"/>
</dbReference>
<dbReference type="PANTHER" id="PTHR10196:SF57">
    <property type="entry name" value="XYLULOSE KINASE"/>
    <property type="match status" value="1"/>
</dbReference>
<dbReference type="Pfam" id="PF02782">
    <property type="entry name" value="FGGY_C"/>
    <property type="match status" value="1"/>
</dbReference>
<dbReference type="Pfam" id="PF00370">
    <property type="entry name" value="FGGY_N"/>
    <property type="match status" value="1"/>
</dbReference>
<dbReference type="SUPFAM" id="SSF53067">
    <property type="entry name" value="Actin-like ATPase domain"/>
    <property type="match status" value="2"/>
</dbReference>
<comment type="function">
    <text evidence="1">Highly specific D-xylulose kinase which participates in the catabolism of xylose. Xylose is a major component of hemicelluloses such as xylan. Most fungi utilize D-xylose via three enzymatic reactions, xylose reductase (XR), xylitol dehydrogenase (XDH), and xylulokinase, to form xylulose 5-phosphate, which enters pentose phosphate pathway (By similarity).</text>
</comment>
<comment type="catalytic activity">
    <reaction>
        <text>D-xylulose + ATP = D-xylulose 5-phosphate + ADP + H(+)</text>
        <dbReference type="Rhea" id="RHEA:10964"/>
        <dbReference type="ChEBI" id="CHEBI:15378"/>
        <dbReference type="ChEBI" id="CHEBI:17140"/>
        <dbReference type="ChEBI" id="CHEBI:30616"/>
        <dbReference type="ChEBI" id="CHEBI:57737"/>
        <dbReference type="ChEBI" id="CHEBI:456216"/>
        <dbReference type="EC" id="2.7.1.17"/>
    </reaction>
</comment>
<comment type="subcellular location">
    <subcellularLocation>
        <location evidence="1">Cytoplasm</location>
    </subcellularLocation>
</comment>
<comment type="induction">
    <text>By D-xylose, L-arabinose or L-arabitol.</text>
</comment>
<comment type="similarity">
    <text evidence="2">Belongs to the FGGY kinase family.</text>
</comment>
<keyword id="KW-0067">ATP-binding</keyword>
<keyword id="KW-0119">Carbohydrate metabolism</keyword>
<keyword id="KW-0963">Cytoplasm</keyword>
<keyword id="KW-0418">Kinase</keyword>
<keyword id="KW-0547">Nucleotide-binding</keyword>
<keyword id="KW-1185">Reference proteome</keyword>
<keyword id="KW-0808">Transferase</keyword>
<keyword id="KW-0859">Xylose metabolism</keyword>
<name>XKS1_NEOFI</name>
<proteinExistence type="evidence at transcript level"/>
<gene>
    <name type="primary">xkiA</name>
    <name type="ORF">NFIA_077470</name>
</gene>